<sequence length="660" mass="74323">MADNSGTEGEEEDCSEAERAGGWFMVEAIVDRRTGDTISSDEDEEDEGEDMVDFIDDRPIGDGQEVAQELLLQQAAADDDEAVHTVKRKFAPSPYFSPVCVPSIEHELSPRLDAIKLGRQSSKAKRRLFQLPDSGYGQTQVDTDTGPSQVQDGCETGDQNGRQQYKEGSGTKDGENGSQEEERAGGDGEESQPLSTETEKGACGVLSILKASNQKATLLGKFKEQFGLGYNELVRHFKSSRTACVDWVVCVFGVYCTVAEGIKQLIQPLCEYAHIQVLPCQWGMTVLMLVRYKRAKNRETVAKGLSTLLNVPESHMLIEPPKLRSSPAALYWYKTSMSNISDVYGETPEWIVRQTMVGHALQEVQFSLSEMVQWAYDHDITDEGTLAYEYALIADVDSNAAAFLASNCQAKYVKDACTMCRHYKRGEQARMSMSEWIRFRSNKVQGEGDWKPIVHFLRYQNVEFIPFLCAFKLFLQGIPKKSCLVFYGPADTGKSYFCMSLLKFMGGVVISYANSHSHFWLQPLSEAKMGLLDDATSQCWSYVDTYLRNALDGNVMCIDRKHRSLLQLKCPPLLITTNVNPLEDDRWKYLRSRLQVFTFSNPCPLTSKGEPVYTLNDQNWKSFFQRLWARLSLTDPDDEEENGEPSEPFRCVPGQNTRTV</sequence>
<dbReference type="EC" id="5.6.2.4" evidence="1"/>
<dbReference type="EMBL" id="U31784">
    <property type="protein sequence ID" value="AAA79431.1"/>
    <property type="molecule type" value="Genomic_DNA"/>
</dbReference>
<dbReference type="SMR" id="P50764"/>
<dbReference type="Proteomes" id="UP000009115">
    <property type="component" value="Segment"/>
</dbReference>
<dbReference type="GO" id="GO:0042025">
    <property type="term" value="C:host cell nucleus"/>
    <property type="evidence" value="ECO:0007669"/>
    <property type="project" value="UniProtKB-SubCell"/>
</dbReference>
<dbReference type="GO" id="GO:0005524">
    <property type="term" value="F:ATP binding"/>
    <property type="evidence" value="ECO:0007669"/>
    <property type="project" value="UniProtKB-UniRule"/>
</dbReference>
<dbReference type="GO" id="GO:0016887">
    <property type="term" value="F:ATP hydrolysis activity"/>
    <property type="evidence" value="ECO:0007669"/>
    <property type="project" value="RHEA"/>
</dbReference>
<dbReference type="GO" id="GO:0003677">
    <property type="term" value="F:DNA binding"/>
    <property type="evidence" value="ECO:0007669"/>
    <property type="project" value="UniProtKB-UniRule"/>
</dbReference>
<dbReference type="GO" id="GO:0003678">
    <property type="term" value="F:DNA helicase activity"/>
    <property type="evidence" value="ECO:0007669"/>
    <property type="project" value="UniProtKB-UniRule"/>
</dbReference>
<dbReference type="GO" id="GO:0006260">
    <property type="term" value="P:DNA replication"/>
    <property type="evidence" value="ECO:0007669"/>
    <property type="project" value="UniProtKB-UniRule"/>
</dbReference>
<dbReference type="Gene3D" id="3.40.1310.10">
    <property type="match status" value="1"/>
</dbReference>
<dbReference type="Gene3D" id="3.40.50.300">
    <property type="entry name" value="P-loop containing nucleotide triphosphate hydrolases"/>
    <property type="match status" value="1"/>
</dbReference>
<dbReference type="Gene3D" id="1.10.10.510">
    <property type="entry name" value="Zinc finger, large T-antigen D1 domain"/>
    <property type="match status" value="1"/>
</dbReference>
<dbReference type="HAMAP" id="MF_04000">
    <property type="entry name" value="PPV_E1"/>
    <property type="match status" value="1"/>
</dbReference>
<dbReference type="InterPro" id="IPR014015">
    <property type="entry name" value="Helicase_SF3_DNA-vir"/>
</dbReference>
<dbReference type="InterPro" id="IPR027417">
    <property type="entry name" value="P-loop_NTPase"/>
</dbReference>
<dbReference type="InterPro" id="IPR001177">
    <property type="entry name" value="PPV_DNA_helicase_E1_C"/>
</dbReference>
<dbReference type="InterPro" id="IPR014000">
    <property type="entry name" value="PPV_DNA_helicase_E1_N"/>
</dbReference>
<dbReference type="InterPro" id="IPR046832">
    <property type="entry name" value="PPV_E1_DBD"/>
</dbReference>
<dbReference type="InterPro" id="IPR046935">
    <property type="entry name" value="PPV_E1_DBD_sf"/>
</dbReference>
<dbReference type="InterPro" id="IPR016393">
    <property type="entry name" value="Rep_E1_papillomaV"/>
</dbReference>
<dbReference type="InterPro" id="IPR037102">
    <property type="entry name" value="Znf_lg_T-Ag_D1_dom_sf"/>
</dbReference>
<dbReference type="Pfam" id="PF00519">
    <property type="entry name" value="PPV_E1_C"/>
    <property type="match status" value="1"/>
</dbReference>
<dbReference type="Pfam" id="PF20450">
    <property type="entry name" value="PPV_E1_DBD"/>
    <property type="match status" value="1"/>
</dbReference>
<dbReference type="Pfam" id="PF00524">
    <property type="entry name" value="PPV_E1_N"/>
    <property type="match status" value="1"/>
</dbReference>
<dbReference type="PIRSF" id="PIRSF003383">
    <property type="entry name" value="Rep_E1_papillomaV"/>
    <property type="match status" value="1"/>
</dbReference>
<dbReference type="SUPFAM" id="SSF55464">
    <property type="entry name" value="Origin of replication-binding domain, RBD-like"/>
    <property type="match status" value="1"/>
</dbReference>
<dbReference type="SUPFAM" id="SSF52540">
    <property type="entry name" value="P-loop containing nucleoside triphosphate hydrolases"/>
    <property type="match status" value="1"/>
</dbReference>
<dbReference type="PROSITE" id="PS51206">
    <property type="entry name" value="SF3_HELICASE_1"/>
    <property type="match status" value="1"/>
</dbReference>
<feature type="chain" id="PRO_0000133127" description="Replication protein E1">
    <location>
        <begin position="1"/>
        <end position="660"/>
    </location>
</feature>
<feature type="domain" description="SF3 helicase" evidence="1">
    <location>
        <begin position="462"/>
        <end position="612"/>
    </location>
</feature>
<feature type="region of interest" description="Disordered" evidence="2">
    <location>
        <begin position="1"/>
        <end position="60"/>
    </location>
</feature>
<feature type="region of interest" description="Disordered" evidence="2">
    <location>
        <begin position="128"/>
        <end position="196"/>
    </location>
</feature>
<feature type="region of interest" description="DNA-binding region" evidence="1">
    <location>
        <begin position="197"/>
        <end position="363"/>
    </location>
</feature>
<feature type="region of interest" description="Disordered" evidence="2">
    <location>
        <begin position="635"/>
        <end position="660"/>
    </location>
</feature>
<feature type="short sequence motif" description="Nuclear localization signal" evidence="1">
    <location>
        <begin position="87"/>
        <end position="89"/>
    </location>
</feature>
<feature type="short sequence motif" description="Nuclear export signal" evidence="1">
    <location>
        <begin position="108"/>
        <end position="117"/>
    </location>
</feature>
<feature type="compositionally biased region" description="Acidic residues" evidence="2">
    <location>
        <begin position="39"/>
        <end position="54"/>
    </location>
</feature>
<feature type="compositionally biased region" description="Polar residues" evidence="2">
    <location>
        <begin position="136"/>
        <end position="163"/>
    </location>
</feature>
<feature type="compositionally biased region" description="Basic and acidic residues" evidence="2">
    <location>
        <begin position="169"/>
        <end position="186"/>
    </location>
</feature>
<feature type="compositionally biased region" description="Acidic residues" evidence="2">
    <location>
        <begin position="635"/>
        <end position="644"/>
    </location>
</feature>
<feature type="binding site" evidence="1">
    <location>
        <begin position="488"/>
        <end position="495"/>
    </location>
    <ligand>
        <name>ATP</name>
        <dbReference type="ChEBI" id="CHEBI:30616"/>
    </ligand>
</feature>
<feature type="modified residue" description="Phosphoserine; by host" evidence="1">
    <location>
        <position position="93"/>
    </location>
</feature>
<feature type="modified residue" description="Phosphoserine; by host" evidence="1">
    <location>
        <position position="97"/>
    </location>
</feature>
<feature type="modified residue" description="Phosphoserine; by host" evidence="1">
    <location>
        <position position="109"/>
    </location>
</feature>
<feature type="modified residue" description="Phosphoserine; by host" evidence="1">
    <location>
        <position position="122"/>
    </location>
</feature>
<feature type="cross-link" description="Glycyl lysine isopeptide (Lys-Gly) (interchain with G-Cter in SUMO)" evidence="1">
    <location>
        <position position="569"/>
    </location>
</feature>
<protein>
    <recommendedName>
        <fullName evidence="1">Replication protein E1</fullName>
        <ecNumber evidence="1">5.6.2.4</ecNumber>
    </recommendedName>
    <alternativeName>
        <fullName evidence="1">ATP-dependent helicase E1</fullName>
    </alternativeName>
    <alternativeName>
        <fullName evidence="1">DNA 3'-5' helicase E1</fullName>
    </alternativeName>
</protein>
<evidence type="ECO:0000255" key="1">
    <source>
        <dbReference type="HAMAP-Rule" id="MF_04000"/>
    </source>
</evidence>
<evidence type="ECO:0000256" key="2">
    <source>
        <dbReference type="SAM" id="MobiDB-lite"/>
    </source>
</evidence>
<reference key="1">
    <citation type="submission" date="1995-10" db="EMBL/GenBank/DDBJ databases">
        <authorList>
            <person name="Delius H."/>
        </authorList>
    </citation>
    <scope>NUCLEOTIDE SEQUENCE [GENOMIC DNA]</scope>
</reference>
<organism>
    <name type="scientific">Human papillomavirus 29</name>
    <dbReference type="NCBI Taxonomy" id="37112"/>
    <lineage>
        <taxon>Viruses</taxon>
        <taxon>Monodnaviria</taxon>
        <taxon>Shotokuvirae</taxon>
        <taxon>Cossaviricota</taxon>
        <taxon>Papovaviricetes</taxon>
        <taxon>Zurhausenvirales</taxon>
        <taxon>Papillomaviridae</taxon>
        <taxon>Firstpapillomavirinae</taxon>
        <taxon>Alphapapillomavirus</taxon>
        <taxon>Alphapapillomavirus 2</taxon>
    </lineage>
</organism>
<accession>P50764</accession>
<keyword id="KW-0067">ATP-binding</keyword>
<keyword id="KW-0235">DNA replication</keyword>
<keyword id="KW-0238">DNA-binding</keyword>
<keyword id="KW-0244">Early protein</keyword>
<keyword id="KW-0347">Helicase</keyword>
<keyword id="KW-1048">Host nucleus</keyword>
<keyword id="KW-0378">Hydrolase</keyword>
<keyword id="KW-0413">Isomerase</keyword>
<keyword id="KW-1017">Isopeptide bond</keyword>
<keyword id="KW-0547">Nucleotide-binding</keyword>
<keyword id="KW-0597">Phosphoprotein</keyword>
<keyword id="KW-1185">Reference proteome</keyword>
<keyword id="KW-0832">Ubl conjugation</keyword>
<gene>
    <name evidence="1" type="primary">E1</name>
</gene>
<name>VE1_HPV29</name>
<organismHost>
    <name type="scientific">Homo sapiens</name>
    <name type="common">Human</name>
    <dbReference type="NCBI Taxonomy" id="9606"/>
</organismHost>
<proteinExistence type="inferred from homology"/>
<comment type="function">
    <text evidence="1">ATP-dependent DNA 3'-5' helicase required for initiation of viral DNA replication. It forms a complex with the viral E2 protein. The E1-E2 complex binds to the replication origin which contains binding sites for both proteins. During the initial step, a dimer of E1 interacts with a dimer of protein E2 leading to a complex that binds the viral origin of replication with high specificity. Then, a second dimer of E1 displaces the E2 dimer in an ATP-dependent manner to form the E1 tetramer. Following this, two E1 monomers are added to each half of the site, which results in the formation of two E1 trimers on the viral ori. Subsequently, two hexamers will be created. The double hexamer acts as a bi-directional helicase machinery and unwinds the viral DNA and then recruits the host DNA polymerase to start replication.</text>
</comment>
<comment type="catalytic activity">
    <reaction evidence="1">
        <text>Couples ATP hydrolysis with the unwinding of duplex DNA by translocating in the 3'-5' direction.</text>
        <dbReference type="EC" id="5.6.2.4"/>
    </reaction>
</comment>
<comment type="catalytic activity">
    <reaction evidence="1">
        <text>ATP + H2O = ADP + phosphate + H(+)</text>
        <dbReference type="Rhea" id="RHEA:13065"/>
        <dbReference type="ChEBI" id="CHEBI:15377"/>
        <dbReference type="ChEBI" id="CHEBI:15378"/>
        <dbReference type="ChEBI" id="CHEBI:30616"/>
        <dbReference type="ChEBI" id="CHEBI:43474"/>
        <dbReference type="ChEBI" id="CHEBI:456216"/>
        <dbReference type="EC" id="5.6.2.4"/>
    </reaction>
</comment>
<comment type="subunit">
    <text evidence="1">Can form hexamers. Interacts with E2 protein; this interaction increases E1 DNA binding specificity. Interacts with host DNA polymerase subunit POLA2. Interacts with host single stranded DNA-binding protein RPA1. Interacts with host TOP1; this interaction stimulates the enzymatic activity of TOP1.</text>
</comment>
<comment type="subcellular location">
    <subcellularLocation>
        <location evidence="1">Host nucleus</location>
    </subcellularLocation>
</comment>
<comment type="PTM">
    <text evidence="1">Phosphorylated.</text>
</comment>
<comment type="PTM">
    <text evidence="1">Sumoylated.</text>
</comment>
<comment type="similarity">
    <text evidence="1">Belongs to the papillomaviridae E1 protein family.</text>
</comment>